<comment type="function">
    <text evidence="1">Forms part of the ribosomal stalk which helps the ribosome interact with GTP-bound translation factors.</text>
</comment>
<comment type="subunit">
    <text evidence="1">Part of the ribosomal stalk of the 50S ribosomal subunit. Interacts with L10 and the large rRNA to form the base of the stalk. L10 forms an elongated spine to which L12 dimers bind in a sequential fashion forming a multimeric L10(L12)X complex.</text>
</comment>
<comment type="PTM">
    <text evidence="1">One or more lysine residues are methylated.</text>
</comment>
<comment type="similarity">
    <text evidence="1">Belongs to the universal ribosomal protein uL11 family.</text>
</comment>
<name>RL11_STRAW</name>
<evidence type="ECO:0000255" key="1">
    <source>
        <dbReference type="HAMAP-Rule" id="MF_00736"/>
    </source>
</evidence>
<evidence type="ECO:0000305" key="2"/>
<proteinExistence type="inferred from homology"/>
<gene>
    <name evidence="1" type="primary">rplK</name>
    <name type="ordered locus">SAV_4910</name>
</gene>
<accession>Q82DQ9</accession>
<keyword id="KW-0488">Methylation</keyword>
<keyword id="KW-1185">Reference proteome</keyword>
<keyword id="KW-0687">Ribonucleoprotein</keyword>
<keyword id="KW-0689">Ribosomal protein</keyword>
<keyword id="KW-0694">RNA-binding</keyword>
<keyword id="KW-0699">rRNA-binding</keyword>
<dbReference type="EMBL" id="BA000030">
    <property type="protein sequence ID" value="BAC72622.1"/>
    <property type="molecule type" value="Genomic_DNA"/>
</dbReference>
<dbReference type="RefSeq" id="WP_010986329.1">
    <property type="nucleotide sequence ID" value="NZ_JZJK01000077.1"/>
</dbReference>
<dbReference type="SMR" id="Q82DQ9"/>
<dbReference type="GeneID" id="41541994"/>
<dbReference type="KEGG" id="sma:SAVERM_4910"/>
<dbReference type="eggNOG" id="COG0080">
    <property type="taxonomic scope" value="Bacteria"/>
</dbReference>
<dbReference type="HOGENOM" id="CLU_074237_2_1_11"/>
<dbReference type="OrthoDB" id="9802408at2"/>
<dbReference type="Proteomes" id="UP000000428">
    <property type="component" value="Chromosome"/>
</dbReference>
<dbReference type="GO" id="GO:0022625">
    <property type="term" value="C:cytosolic large ribosomal subunit"/>
    <property type="evidence" value="ECO:0007669"/>
    <property type="project" value="TreeGrafter"/>
</dbReference>
<dbReference type="GO" id="GO:0070180">
    <property type="term" value="F:large ribosomal subunit rRNA binding"/>
    <property type="evidence" value="ECO:0007669"/>
    <property type="project" value="UniProtKB-UniRule"/>
</dbReference>
<dbReference type="GO" id="GO:0003735">
    <property type="term" value="F:structural constituent of ribosome"/>
    <property type="evidence" value="ECO:0007669"/>
    <property type="project" value="InterPro"/>
</dbReference>
<dbReference type="GO" id="GO:0006412">
    <property type="term" value="P:translation"/>
    <property type="evidence" value="ECO:0007669"/>
    <property type="project" value="UniProtKB-UniRule"/>
</dbReference>
<dbReference type="CDD" id="cd00349">
    <property type="entry name" value="Ribosomal_L11"/>
    <property type="match status" value="1"/>
</dbReference>
<dbReference type="FunFam" id="1.10.10.250:FF:000001">
    <property type="entry name" value="50S ribosomal protein L11"/>
    <property type="match status" value="1"/>
</dbReference>
<dbReference type="FunFam" id="3.30.1550.10:FF:000001">
    <property type="entry name" value="50S ribosomal protein L11"/>
    <property type="match status" value="1"/>
</dbReference>
<dbReference type="Gene3D" id="1.10.10.250">
    <property type="entry name" value="Ribosomal protein L11, C-terminal domain"/>
    <property type="match status" value="1"/>
</dbReference>
<dbReference type="Gene3D" id="3.30.1550.10">
    <property type="entry name" value="Ribosomal protein L11/L12, N-terminal domain"/>
    <property type="match status" value="1"/>
</dbReference>
<dbReference type="HAMAP" id="MF_00736">
    <property type="entry name" value="Ribosomal_uL11"/>
    <property type="match status" value="1"/>
</dbReference>
<dbReference type="InterPro" id="IPR000911">
    <property type="entry name" value="Ribosomal_uL11"/>
</dbReference>
<dbReference type="InterPro" id="IPR006519">
    <property type="entry name" value="Ribosomal_uL11_bac-typ"/>
</dbReference>
<dbReference type="InterPro" id="IPR020783">
    <property type="entry name" value="Ribosomal_uL11_C"/>
</dbReference>
<dbReference type="InterPro" id="IPR036769">
    <property type="entry name" value="Ribosomal_uL11_C_sf"/>
</dbReference>
<dbReference type="InterPro" id="IPR020785">
    <property type="entry name" value="Ribosomal_uL11_CS"/>
</dbReference>
<dbReference type="InterPro" id="IPR020784">
    <property type="entry name" value="Ribosomal_uL11_N"/>
</dbReference>
<dbReference type="InterPro" id="IPR036796">
    <property type="entry name" value="Ribosomal_uL11_N_sf"/>
</dbReference>
<dbReference type="NCBIfam" id="TIGR01632">
    <property type="entry name" value="L11_bact"/>
    <property type="match status" value="1"/>
</dbReference>
<dbReference type="PANTHER" id="PTHR11661">
    <property type="entry name" value="60S RIBOSOMAL PROTEIN L12"/>
    <property type="match status" value="1"/>
</dbReference>
<dbReference type="PANTHER" id="PTHR11661:SF1">
    <property type="entry name" value="LARGE RIBOSOMAL SUBUNIT PROTEIN UL11M"/>
    <property type="match status" value="1"/>
</dbReference>
<dbReference type="Pfam" id="PF00298">
    <property type="entry name" value="Ribosomal_L11"/>
    <property type="match status" value="1"/>
</dbReference>
<dbReference type="Pfam" id="PF03946">
    <property type="entry name" value="Ribosomal_L11_N"/>
    <property type="match status" value="1"/>
</dbReference>
<dbReference type="SMART" id="SM00649">
    <property type="entry name" value="RL11"/>
    <property type="match status" value="1"/>
</dbReference>
<dbReference type="SUPFAM" id="SSF54747">
    <property type="entry name" value="Ribosomal L11/L12e N-terminal domain"/>
    <property type="match status" value="1"/>
</dbReference>
<dbReference type="SUPFAM" id="SSF46906">
    <property type="entry name" value="Ribosomal protein L11, C-terminal domain"/>
    <property type="match status" value="1"/>
</dbReference>
<dbReference type="PROSITE" id="PS00359">
    <property type="entry name" value="RIBOSOMAL_L11"/>
    <property type="match status" value="1"/>
</dbReference>
<sequence>MPPKKKKVTGLIKLQIQAGAANPAPPVGPALGQHGVNIMEFCKAYNAATESQRGWVIPVEITVYEDRSFTFITKTPPAAKMILKAAGVEKGSGEPHKTKVAKITQAQVREIATTKLPDLNANDLDAASKIIAGTARSMGITVEG</sequence>
<protein>
    <recommendedName>
        <fullName evidence="1">Large ribosomal subunit protein uL11</fullName>
    </recommendedName>
    <alternativeName>
        <fullName evidence="2">50S ribosomal protein L11</fullName>
    </alternativeName>
</protein>
<feature type="chain" id="PRO_0000104376" description="Large ribosomal subunit protein uL11">
    <location>
        <begin position="1"/>
        <end position="144"/>
    </location>
</feature>
<organism>
    <name type="scientific">Streptomyces avermitilis (strain ATCC 31267 / DSM 46492 / JCM 5070 / NBRC 14893 / NCIMB 12804 / NRRL 8165 / MA-4680)</name>
    <dbReference type="NCBI Taxonomy" id="227882"/>
    <lineage>
        <taxon>Bacteria</taxon>
        <taxon>Bacillati</taxon>
        <taxon>Actinomycetota</taxon>
        <taxon>Actinomycetes</taxon>
        <taxon>Kitasatosporales</taxon>
        <taxon>Streptomycetaceae</taxon>
        <taxon>Streptomyces</taxon>
    </lineage>
</organism>
<reference key="1">
    <citation type="journal article" date="2001" name="Proc. Natl. Acad. Sci. U.S.A.">
        <title>Genome sequence of an industrial microorganism Streptomyces avermitilis: deducing the ability of producing secondary metabolites.</title>
        <authorList>
            <person name="Omura S."/>
            <person name="Ikeda H."/>
            <person name="Ishikawa J."/>
            <person name="Hanamoto A."/>
            <person name="Takahashi C."/>
            <person name="Shinose M."/>
            <person name="Takahashi Y."/>
            <person name="Horikawa H."/>
            <person name="Nakazawa H."/>
            <person name="Osonoe T."/>
            <person name="Kikuchi H."/>
            <person name="Shiba T."/>
            <person name="Sakaki Y."/>
            <person name="Hattori M."/>
        </authorList>
    </citation>
    <scope>NUCLEOTIDE SEQUENCE [LARGE SCALE GENOMIC DNA]</scope>
    <source>
        <strain>ATCC 31267 / DSM 46492 / JCM 5070 / NBRC 14893 / NCIMB 12804 / NRRL 8165 / MA-4680</strain>
    </source>
</reference>
<reference key="2">
    <citation type="journal article" date="2003" name="Nat. Biotechnol.">
        <title>Complete genome sequence and comparative analysis of the industrial microorganism Streptomyces avermitilis.</title>
        <authorList>
            <person name="Ikeda H."/>
            <person name="Ishikawa J."/>
            <person name="Hanamoto A."/>
            <person name="Shinose M."/>
            <person name="Kikuchi H."/>
            <person name="Shiba T."/>
            <person name="Sakaki Y."/>
            <person name="Hattori M."/>
            <person name="Omura S."/>
        </authorList>
    </citation>
    <scope>NUCLEOTIDE SEQUENCE [LARGE SCALE GENOMIC DNA]</scope>
    <source>
        <strain>ATCC 31267 / DSM 46492 / JCM 5070 / NBRC 14893 / NCIMB 12804 / NRRL 8165 / MA-4680</strain>
    </source>
</reference>